<evidence type="ECO:0000255" key="1">
    <source>
        <dbReference type="HAMAP-Rule" id="MF_01954"/>
    </source>
</evidence>
<comment type="catalytic activity">
    <reaction evidence="1">
        <text>urea + 2 H2O + H(+) = hydrogencarbonate + 2 NH4(+)</text>
        <dbReference type="Rhea" id="RHEA:20557"/>
        <dbReference type="ChEBI" id="CHEBI:15377"/>
        <dbReference type="ChEBI" id="CHEBI:15378"/>
        <dbReference type="ChEBI" id="CHEBI:16199"/>
        <dbReference type="ChEBI" id="CHEBI:17544"/>
        <dbReference type="ChEBI" id="CHEBI:28938"/>
        <dbReference type="EC" id="3.5.1.5"/>
    </reaction>
</comment>
<comment type="pathway">
    <text evidence="1">Nitrogen metabolism; urea degradation; CO(2) and NH(3) from urea (urease route): step 1/1.</text>
</comment>
<comment type="subunit">
    <text evidence="1">Heterotrimer of UreA (gamma), UreB (beta) and UreC (alpha) subunits. Three heterotrimers associate to form the active enzyme.</text>
</comment>
<comment type="subcellular location">
    <subcellularLocation>
        <location evidence="1">Cytoplasm</location>
    </subcellularLocation>
</comment>
<comment type="similarity">
    <text evidence="1">Belongs to the urease beta subunit family.</text>
</comment>
<gene>
    <name evidence="1" type="primary">ureB</name>
    <name type="ordered locus">STER_0324</name>
</gene>
<name>URE2_STRTD</name>
<reference key="1">
    <citation type="journal article" date="2006" name="Proc. Natl. Acad. Sci. U.S.A.">
        <title>Comparative genomics of the lactic acid bacteria.</title>
        <authorList>
            <person name="Makarova K.S."/>
            <person name="Slesarev A."/>
            <person name="Wolf Y.I."/>
            <person name="Sorokin A."/>
            <person name="Mirkin B."/>
            <person name="Koonin E.V."/>
            <person name="Pavlov A."/>
            <person name="Pavlova N."/>
            <person name="Karamychev V."/>
            <person name="Polouchine N."/>
            <person name="Shakhova V."/>
            <person name="Grigoriev I."/>
            <person name="Lou Y."/>
            <person name="Rohksar D."/>
            <person name="Lucas S."/>
            <person name="Huang K."/>
            <person name="Goodstein D.M."/>
            <person name="Hawkins T."/>
            <person name="Plengvidhya V."/>
            <person name="Welker D."/>
            <person name="Hughes J."/>
            <person name="Goh Y."/>
            <person name="Benson A."/>
            <person name="Baldwin K."/>
            <person name="Lee J.-H."/>
            <person name="Diaz-Muniz I."/>
            <person name="Dosti B."/>
            <person name="Smeianov V."/>
            <person name="Wechter W."/>
            <person name="Barabote R."/>
            <person name="Lorca G."/>
            <person name="Altermann E."/>
            <person name="Barrangou R."/>
            <person name="Ganesan B."/>
            <person name="Xie Y."/>
            <person name="Rawsthorne H."/>
            <person name="Tamir D."/>
            <person name="Parker C."/>
            <person name="Breidt F."/>
            <person name="Broadbent J.R."/>
            <person name="Hutkins R."/>
            <person name="O'Sullivan D."/>
            <person name="Steele J."/>
            <person name="Unlu G."/>
            <person name="Saier M.H. Jr."/>
            <person name="Klaenhammer T."/>
            <person name="Richardson P."/>
            <person name="Kozyavkin S."/>
            <person name="Weimer B.C."/>
            <person name="Mills D.A."/>
        </authorList>
    </citation>
    <scope>NUCLEOTIDE SEQUENCE [LARGE SCALE GENOMIC DNA]</scope>
    <source>
        <strain>ATCC BAA-491 / LMD-9</strain>
    </source>
</reference>
<sequence length="103" mass="11478">MIPGEYHVASEPIDYNGGYEAISLEVKNVGDRAAQVGSHYHFYEANEAGLQFDREKARGKRLDIPAGTAIRFEPGETKTVQLIDFGGKRRIFGFNNKVNGFLD</sequence>
<feature type="chain" id="PRO_1000070778" description="Urease subunit beta">
    <location>
        <begin position="1"/>
        <end position="103"/>
    </location>
</feature>
<dbReference type="EC" id="3.5.1.5" evidence="1"/>
<dbReference type="EMBL" id="CP000419">
    <property type="protein sequence ID" value="ABJ65628.1"/>
    <property type="molecule type" value="Genomic_DNA"/>
</dbReference>
<dbReference type="RefSeq" id="WP_002886559.1">
    <property type="nucleotide sequence ID" value="NC_008532.1"/>
</dbReference>
<dbReference type="SMR" id="Q03ME4"/>
<dbReference type="KEGG" id="ste:STER_0324"/>
<dbReference type="HOGENOM" id="CLU_129707_1_1_9"/>
<dbReference type="UniPathway" id="UPA00258">
    <property type="reaction ID" value="UER00370"/>
</dbReference>
<dbReference type="GO" id="GO:0035550">
    <property type="term" value="C:urease complex"/>
    <property type="evidence" value="ECO:0007669"/>
    <property type="project" value="InterPro"/>
</dbReference>
<dbReference type="GO" id="GO:0009039">
    <property type="term" value="F:urease activity"/>
    <property type="evidence" value="ECO:0007669"/>
    <property type="project" value="UniProtKB-UniRule"/>
</dbReference>
<dbReference type="GO" id="GO:0043419">
    <property type="term" value="P:urea catabolic process"/>
    <property type="evidence" value="ECO:0007669"/>
    <property type="project" value="UniProtKB-UniRule"/>
</dbReference>
<dbReference type="CDD" id="cd00407">
    <property type="entry name" value="Urease_beta"/>
    <property type="match status" value="1"/>
</dbReference>
<dbReference type="FunFam" id="2.10.150.10:FF:000001">
    <property type="entry name" value="Urease subunit beta"/>
    <property type="match status" value="1"/>
</dbReference>
<dbReference type="Gene3D" id="2.10.150.10">
    <property type="entry name" value="Urease, beta subunit"/>
    <property type="match status" value="1"/>
</dbReference>
<dbReference type="HAMAP" id="MF_01954">
    <property type="entry name" value="Urease_beta"/>
    <property type="match status" value="1"/>
</dbReference>
<dbReference type="InterPro" id="IPR002019">
    <property type="entry name" value="Urease_beta-like"/>
</dbReference>
<dbReference type="InterPro" id="IPR036461">
    <property type="entry name" value="Urease_betasu_sf"/>
</dbReference>
<dbReference type="InterPro" id="IPR050069">
    <property type="entry name" value="Urease_subunit"/>
</dbReference>
<dbReference type="NCBIfam" id="NF009682">
    <property type="entry name" value="PRK13203.1"/>
    <property type="match status" value="1"/>
</dbReference>
<dbReference type="NCBIfam" id="TIGR00192">
    <property type="entry name" value="urease_beta"/>
    <property type="match status" value="1"/>
</dbReference>
<dbReference type="PANTHER" id="PTHR33569">
    <property type="entry name" value="UREASE"/>
    <property type="match status" value="1"/>
</dbReference>
<dbReference type="PANTHER" id="PTHR33569:SF1">
    <property type="entry name" value="UREASE"/>
    <property type="match status" value="1"/>
</dbReference>
<dbReference type="Pfam" id="PF00699">
    <property type="entry name" value="Urease_beta"/>
    <property type="match status" value="1"/>
</dbReference>
<dbReference type="SUPFAM" id="SSF51278">
    <property type="entry name" value="Urease, beta-subunit"/>
    <property type="match status" value="1"/>
</dbReference>
<accession>Q03ME4</accession>
<keyword id="KW-0963">Cytoplasm</keyword>
<keyword id="KW-0378">Hydrolase</keyword>
<protein>
    <recommendedName>
        <fullName evidence="1">Urease subunit beta</fullName>
        <ecNumber evidence="1">3.5.1.5</ecNumber>
    </recommendedName>
    <alternativeName>
        <fullName evidence="1">Urea amidohydrolase subunit beta</fullName>
    </alternativeName>
</protein>
<proteinExistence type="inferred from homology"/>
<organism>
    <name type="scientific">Streptococcus thermophilus (strain ATCC BAA-491 / LMD-9)</name>
    <dbReference type="NCBI Taxonomy" id="322159"/>
    <lineage>
        <taxon>Bacteria</taxon>
        <taxon>Bacillati</taxon>
        <taxon>Bacillota</taxon>
        <taxon>Bacilli</taxon>
        <taxon>Lactobacillales</taxon>
        <taxon>Streptococcaceae</taxon>
        <taxon>Streptococcus</taxon>
    </lineage>
</organism>